<gene>
    <name evidence="1" type="primary">cbiN</name>
    <name type="ordered locus">SCO5960</name>
    <name type="ORF">SC7H1.30c</name>
</gene>
<name>CBIN_STRCO</name>
<comment type="function">
    <text evidence="1">Part of the energy-coupling factor (ECF) transporter complex CbiMNOQ involved in cobalt import.</text>
</comment>
<comment type="pathway">
    <text evidence="1">Cofactor biosynthesis; adenosylcobalamin biosynthesis.</text>
</comment>
<comment type="subunit">
    <text evidence="1">Forms an energy-coupling factor (ECF) transporter complex composed of an ATP-binding protein (A component, CbiO), a transmembrane protein (T component, CbiQ) and 2 possible substrate-capture proteins (S components, CbiM and CbiN) of unknown stoichimetry.</text>
</comment>
<comment type="subcellular location">
    <subcellularLocation>
        <location evidence="1">Cell membrane</location>
        <topology evidence="1">Multi-pass membrane protein</topology>
    </subcellularLocation>
</comment>
<comment type="similarity">
    <text evidence="1">Belongs to the CbiN family.</text>
</comment>
<feature type="chain" id="PRO_0000134699" description="Cobalt transport protein CbiN">
    <location>
        <begin position="1"/>
        <end position="118"/>
    </location>
</feature>
<feature type="transmembrane region" description="Helical" evidence="1">
    <location>
        <begin position="7"/>
        <end position="27"/>
    </location>
</feature>
<feature type="transmembrane region" description="Helical" evidence="1">
    <location>
        <begin position="70"/>
        <end position="90"/>
    </location>
</feature>
<feature type="region of interest" description="Disordered" evidence="2">
    <location>
        <begin position="99"/>
        <end position="118"/>
    </location>
</feature>
<feature type="compositionally biased region" description="Low complexity" evidence="2">
    <location>
        <begin position="102"/>
        <end position="118"/>
    </location>
</feature>
<dbReference type="EMBL" id="AL939125">
    <property type="protein sequence ID" value="CAA16217.1"/>
    <property type="molecule type" value="Genomic_DNA"/>
</dbReference>
<dbReference type="PIR" id="T35725">
    <property type="entry name" value="T35725"/>
</dbReference>
<dbReference type="RefSeq" id="NP_630077.1">
    <property type="nucleotide sequence ID" value="NC_003888.3"/>
</dbReference>
<dbReference type="RefSeq" id="WP_011030566.1">
    <property type="nucleotide sequence ID" value="NZ_VNID01000007.1"/>
</dbReference>
<dbReference type="STRING" id="100226.gene:17763620"/>
<dbReference type="PaxDb" id="100226-SCO5960"/>
<dbReference type="KEGG" id="sco:SCO5960"/>
<dbReference type="PATRIC" id="fig|100226.15.peg.6057"/>
<dbReference type="eggNOG" id="COG1930">
    <property type="taxonomic scope" value="Bacteria"/>
</dbReference>
<dbReference type="HOGENOM" id="CLU_136197_2_0_11"/>
<dbReference type="InParanoid" id="O54189"/>
<dbReference type="UniPathway" id="UPA00148"/>
<dbReference type="Proteomes" id="UP000001973">
    <property type="component" value="Chromosome"/>
</dbReference>
<dbReference type="GO" id="GO:0005886">
    <property type="term" value="C:plasma membrane"/>
    <property type="evidence" value="ECO:0007669"/>
    <property type="project" value="UniProtKB-SubCell"/>
</dbReference>
<dbReference type="GO" id="GO:0015087">
    <property type="term" value="F:cobalt ion transmembrane transporter activity"/>
    <property type="evidence" value="ECO:0007669"/>
    <property type="project" value="UniProtKB-UniRule"/>
</dbReference>
<dbReference type="GO" id="GO:0009236">
    <property type="term" value="P:cobalamin biosynthetic process"/>
    <property type="evidence" value="ECO:0007669"/>
    <property type="project" value="UniProtKB-UniRule"/>
</dbReference>
<dbReference type="HAMAP" id="MF_00330">
    <property type="entry name" value="CbiN"/>
    <property type="match status" value="1"/>
</dbReference>
<dbReference type="InterPro" id="IPR003705">
    <property type="entry name" value="CbiN"/>
</dbReference>
<dbReference type="NCBIfam" id="TIGR01165">
    <property type="entry name" value="cbiN"/>
    <property type="match status" value="1"/>
</dbReference>
<dbReference type="NCBIfam" id="NF002780">
    <property type="entry name" value="PRK02898.1"/>
    <property type="match status" value="1"/>
</dbReference>
<dbReference type="PANTHER" id="PTHR38662">
    <property type="entry name" value="COBALT TRANSPORT PROTEIN CBIN"/>
    <property type="match status" value="1"/>
</dbReference>
<dbReference type="PANTHER" id="PTHR38662:SF1">
    <property type="entry name" value="COBALT TRANSPORT PROTEIN CBIN"/>
    <property type="match status" value="1"/>
</dbReference>
<dbReference type="Pfam" id="PF02553">
    <property type="entry name" value="CbiN"/>
    <property type="match status" value="1"/>
</dbReference>
<accession>O54189</accession>
<organism>
    <name type="scientific">Streptomyces coelicolor (strain ATCC BAA-471 / A3(2) / M145)</name>
    <dbReference type="NCBI Taxonomy" id="100226"/>
    <lineage>
        <taxon>Bacteria</taxon>
        <taxon>Bacillati</taxon>
        <taxon>Actinomycetota</taxon>
        <taxon>Actinomycetes</taxon>
        <taxon>Kitasatosporales</taxon>
        <taxon>Streptomycetaceae</taxon>
        <taxon>Streptomyces</taxon>
        <taxon>Streptomyces albidoflavus group</taxon>
    </lineage>
</organism>
<sequence length="118" mass="12271">MSRNTRINALLLLAVAALAVLPLVLGLGDHKEEPFAGADAEAETAITEIEPDYEPWFSPLHEPPSGEVESALFALQAALGAGVLAYYFGLRRGRRQGEERASAASGAAAAPGDAPEGD</sequence>
<proteinExistence type="inferred from homology"/>
<evidence type="ECO:0000255" key="1">
    <source>
        <dbReference type="HAMAP-Rule" id="MF_00330"/>
    </source>
</evidence>
<evidence type="ECO:0000256" key="2">
    <source>
        <dbReference type="SAM" id="MobiDB-lite"/>
    </source>
</evidence>
<keyword id="KW-1003">Cell membrane</keyword>
<keyword id="KW-0169">Cobalamin biosynthesis</keyword>
<keyword id="KW-0170">Cobalt</keyword>
<keyword id="KW-0171">Cobalt transport</keyword>
<keyword id="KW-0406">Ion transport</keyword>
<keyword id="KW-0472">Membrane</keyword>
<keyword id="KW-1185">Reference proteome</keyword>
<keyword id="KW-0812">Transmembrane</keyword>
<keyword id="KW-1133">Transmembrane helix</keyword>
<keyword id="KW-0813">Transport</keyword>
<reference key="1">
    <citation type="journal article" date="2002" name="Nature">
        <title>Complete genome sequence of the model actinomycete Streptomyces coelicolor A3(2).</title>
        <authorList>
            <person name="Bentley S.D."/>
            <person name="Chater K.F."/>
            <person name="Cerdeno-Tarraga A.-M."/>
            <person name="Challis G.L."/>
            <person name="Thomson N.R."/>
            <person name="James K.D."/>
            <person name="Harris D.E."/>
            <person name="Quail M.A."/>
            <person name="Kieser H."/>
            <person name="Harper D."/>
            <person name="Bateman A."/>
            <person name="Brown S."/>
            <person name="Chandra G."/>
            <person name="Chen C.W."/>
            <person name="Collins M."/>
            <person name="Cronin A."/>
            <person name="Fraser A."/>
            <person name="Goble A."/>
            <person name="Hidalgo J."/>
            <person name="Hornsby T."/>
            <person name="Howarth S."/>
            <person name="Huang C.-H."/>
            <person name="Kieser T."/>
            <person name="Larke L."/>
            <person name="Murphy L.D."/>
            <person name="Oliver K."/>
            <person name="O'Neil S."/>
            <person name="Rabbinowitsch E."/>
            <person name="Rajandream M.A."/>
            <person name="Rutherford K.M."/>
            <person name="Rutter S."/>
            <person name="Seeger K."/>
            <person name="Saunders D."/>
            <person name="Sharp S."/>
            <person name="Squares R."/>
            <person name="Squares S."/>
            <person name="Taylor K."/>
            <person name="Warren T."/>
            <person name="Wietzorrek A."/>
            <person name="Woodward J.R."/>
            <person name="Barrell B.G."/>
            <person name="Parkhill J."/>
            <person name="Hopwood D.A."/>
        </authorList>
    </citation>
    <scope>NUCLEOTIDE SEQUENCE [LARGE SCALE GENOMIC DNA]</scope>
    <source>
        <strain>ATCC BAA-471 / A3(2) / M145</strain>
    </source>
</reference>
<protein>
    <recommendedName>
        <fullName evidence="1">Cobalt transport protein CbiN</fullName>
    </recommendedName>
    <alternativeName>
        <fullName evidence="1">Energy-coupling factor transporter probable substrate-capture protein CbiN</fullName>
        <shortName evidence="1">ECF transporter S component CbiN</shortName>
    </alternativeName>
</protein>